<name>TRUA_BORBR</name>
<sequence length="270" mass="29725">MSRIALGLAYDGSAWQGWQTQPHGVTVQDQVEAALASFAGGGGPVATVCAGRTDTGVHAAMQVIHLDTDLQRRDESWVRGVNAFLPPSIVVQWARPVSEAFHARFSARSRTYVYLLWRGRVRPALWAGRAGWAFQPLDVPAMRAAARTLLGEHDFSSFRSSQCQARHPVRTLHRLDIDERGAFLVFTLRANAFLHHMVRNLIGALLQVGQGRESVAWMDALLRARDRRLGAPTFMPDGLYLSAIEYPAEFGFDELDGGTMLLSPFTGALG</sequence>
<accession>Q7U386</accession>
<gene>
    <name evidence="1" type="primary">truA</name>
    <name type="ordered locus">BB2135</name>
</gene>
<evidence type="ECO:0000255" key="1">
    <source>
        <dbReference type="HAMAP-Rule" id="MF_00171"/>
    </source>
</evidence>
<keyword id="KW-0413">Isomerase</keyword>
<keyword id="KW-0819">tRNA processing</keyword>
<reference key="1">
    <citation type="journal article" date="2003" name="Nat. Genet.">
        <title>Comparative analysis of the genome sequences of Bordetella pertussis, Bordetella parapertussis and Bordetella bronchiseptica.</title>
        <authorList>
            <person name="Parkhill J."/>
            <person name="Sebaihia M."/>
            <person name="Preston A."/>
            <person name="Murphy L.D."/>
            <person name="Thomson N.R."/>
            <person name="Harris D.E."/>
            <person name="Holden M.T.G."/>
            <person name="Churcher C.M."/>
            <person name="Bentley S.D."/>
            <person name="Mungall K.L."/>
            <person name="Cerdeno-Tarraga A.-M."/>
            <person name="Temple L."/>
            <person name="James K.D."/>
            <person name="Harris B."/>
            <person name="Quail M.A."/>
            <person name="Achtman M."/>
            <person name="Atkin R."/>
            <person name="Baker S."/>
            <person name="Basham D."/>
            <person name="Bason N."/>
            <person name="Cherevach I."/>
            <person name="Chillingworth T."/>
            <person name="Collins M."/>
            <person name="Cronin A."/>
            <person name="Davis P."/>
            <person name="Doggett J."/>
            <person name="Feltwell T."/>
            <person name="Goble A."/>
            <person name="Hamlin N."/>
            <person name="Hauser H."/>
            <person name="Holroyd S."/>
            <person name="Jagels K."/>
            <person name="Leather S."/>
            <person name="Moule S."/>
            <person name="Norberczak H."/>
            <person name="O'Neil S."/>
            <person name="Ormond D."/>
            <person name="Price C."/>
            <person name="Rabbinowitsch E."/>
            <person name="Rutter S."/>
            <person name="Sanders M."/>
            <person name="Saunders D."/>
            <person name="Seeger K."/>
            <person name="Sharp S."/>
            <person name="Simmonds M."/>
            <person name="Skelton J."/>
            <person name="Squares R."/>
            <person name="Squares S."/>
            <person name="Stevens K."/>
            <person name="Unwin L."/>
            <person name="Whitehead S."/>
            <person name="Barrell B.G."/>
            <person name="Maskell D.J."/>
        </authorList>
    </citation>
    <scope>NUCLEOTIDE SEQUENCE [LARGE SCALE GENOMIC DNA]</scope>
    <source>
        <strain>ATCC BAA-588 / NCTC 13252 / RB50</strain>
    </source>
</reference>
<comment type="function">
    <text evidence="1">Formation of pseudouridine at positions 38, 39 and 40 in the anticodon stem and loop of transfer RNAs.</text>
</comment>
<comment type="catalytic activity">
    <reaction evidence="1">
        <text>uridine(38/39/40) in tRNA = pseudouridine(38/39/40) in tRNA</text>
        <dbReference type="Rhea" id="RHEA:22376"/>
        <dbReference type="Rhea" id="RHEA-COMP:10085"/>
        <dbReference type="Rhea" id="RHEA-COMP:10087"/>
        <dbReference type="ChEBI" id="CHEBI:65314"/>
        <dbReference type="ChEBI" id="CHEBI:65315"/>
        <dbReference type="EC" id="5.4.99.12"/>
    </reaction>
</comment>
<comment type="subunit">
    <text evidence="1">Homodimer.</text>
</comment>
<comment type="similarity">
    <text evidence="1">Belongs to the tRNA pseudouridine synthase TruA family.</text>
</comment>
<protein>
    <recommendedName>
        <fullName evidence="1">tRNA pseudouridine synthase A</fullName>
        <ecNumber evidence="1">5.4.99.12</ecNumber>
    </recommendedName>
    <alternativeName>
        <fullName evidence="1">tRNA pseudouridine(38-40) synthase</fullName>
    </alternativeName>
    <alternativeName>
        <fullName evidence="1">tRNA pseudouridylate synthase I</fullName>
    </alternativeName>
    <alternativeName>
        <fullName evidence="1">tRNA-uridine isomerase I</fullName>
    </alternativeName>
</protein>
<proteinExistence type="inferred from homology"/>
<organism>
    <name type="scientific">Bordetella bronchiseptica (strain ATCC BAA-588 / NCTC 13252 / RB50)</name>
    <name type="common">Alcaligenes bronchisepticus</name>
    <dbReference type="NCBI Taxonomy" id="257310"/>
    <lineage>
        <taxon>Bacteria</taxon>
        <taxon>Pseudomonadati</taxon>
        <taxon>Pseudomonadota</taxon>
        <taxon>Betaproteobacteria</taxon>
        <taxon>Burkholderiales</taxon>
        <taxon>Alcaligenaceae</taxon>
        <taxon>Bordetella</taxon>
    </lineage>
</organism>
<dbReference type="EC" id="5.4.99.12" evidence="1"/>
<dbReference type="EMBL" id="BX640443">
    <property type="protein sequence ID" value="CAE32631.1"/>
    <property type="molecule type" value="Genomic_DNA"/>
</dbReference>
<dbReference type="RefSeq" id="WP_003812640.1">
    <property type="nucleotide sequence ID" value="NC_002927.3"/>
</dbReference>
<dbReference type="SMR" id="Q7U386"/>
<dbReference type="GeneID" id="93203719"/>
<dbReference type="KEGG" id="bbr:BB2135"/>
<dbReference type="eggNOG" id="COG0101">
    <property type="taxonomic scope" value="Bacteria"/>
</dbReference>
<dbReference type="HOGENOM" id="CLU_014673_0_2_4"/>
<dbReference type="Proteomes" id="UP000001027">
    <property type="component" value="Chromosome"/>
</dbReference>
<dbReference type="GO" id="GO:0003723">
    <property type="term" value="F:RNA binding"/>
    <property type="evidence" value="ECO:0007669"/>
    <property type="project" value="InterPro"/>
</dbReference>
<dbReference type="GO" id="GO:0160147">
    <property type="term" value="F:tRNA pseudouridine(38-40) synthase activity"/>
    <property type="evidence" value="ECO:0007669"/>
    <property type="project" value="UniProtKB-EC"/>
</dbReference>
<dbReference type="GO" id="GO:0031119">
    <property type="term" value="P:tRNA pseudouridine synthesis"/>
    <property type="evidence" value="ECO:0007669"/>
    <property type="project" value="UniProtKB-UniRule"/>
</dbReference>
<dbReference type="CDD" id="cd02570">
    <property type="entry name" value="PseudoU_synth_EcTruA"/>
    <property type="match status" value="1"/>
</dbReference>
<dbReference type="FunFam" id="3.30.70.580:FF:000001">
    <property type="entry name" value="tRNA pseudouridine synthase A"/>
    <property type="match status" value="1"/>
</dbReference>
<dbReference type="Gene3D" id="3.30.70.660">
    <property type="entry name" value="Pseudouridine synthase I, catalytic domain, C-terminal subdomain"/>
    <property type="match status" value="1"/>
</dbReference>
<dbReference type="Gene3D" id="3.30.70.580">
    <property type="entry name" value="Pseudouridine synthase I, catalytic domain, N-terminal subdomain"/>
    <property type="match status" value="1"/>
</dbReference>
<dbReference type="HAMAP" id="MF_00171">
    <property type="entry name" value="TruA"/>
    <property type="match status" value="1"/>
</dbReference>
<dbReference type="InterPro" id="IPR020103">
    <property type="entry name" value="PsdUridine_synth_cat_dom_sf"/>
</dbReference>
<dbReference type="InterPro" id="IPR001406">
    <property type="entry name" value="PsdUridine_synth_TruA"/>
</dbReference>
<dbReference type="InterPro" id="IPR020097">
    <property type="entry name" value="PsdUridine_synth_TruA_a/b_dom"/>
</dbReference>
<dbReference type="InterPro" id="IPR020095">
    <property type="entry name" value="PsdUridine_synth_TruA_C"/>
</dbReference>
<dbReference type="InterPro" id="IPR020094">
    <property type="entry name" value="TruA/RsuA/RluB/E/F_N"/>
</dbReference>
<dbReference type="NCBIfam" id="TIGR00071">
    <property type="entry name" value="hisT_truA"/>
    <property type="match status" value="1"/>
</dbReference>
<dbReference type="PANTHER" id="PTHR11142">
    <property type="entry name" value="PSEUDOURIDYLATE SYNTHASE"/>
    <property type="match status" value="1"/>
</dbReference>
<dbReference type="PANTHER" id="PTHR11142:SF0">
    <property type="entry name" value="TRNA PSEUDOURIDINE SYNTHASE-LIKE 1"/>
    <property type="match status" value="1"/>
</dbReference>
<dbReference type="Pfam" id="PF01416">
    <property type="entry name" value="PseudoU_synth_1"/>
    <property type="match status" value="2"/>
</dbReference>
<dbReference type="PIRSF" id="PIRSF001430">
    <property type="entry name" value="tRNA_psdUrid_synth"/>
    <property type="match status" value="1"/>
</dbReference>
<dbReference type="SUPFAM" id="SSF55120">
    <property type="entry name" value="Pseudouridine synthase"/>
    <property type="match status" value="1"/>
</dbReference>
<feature type="chain" id="PRO_0000057340" description="tRNA pseudouridine synthase A">
    <location>
        <begin position="1"/>
        <end position="270"/>
    </location>
</feature>
<feature type="active site" description="Nucleophile" evidence="1">
    <location>
        <position position="54"/>
    </location>
</feature>
<feature type="binding site" evidence="1">
    <location>
        <position position="112"/>
    </location>
    <ligand>
        <name>substrate</name>
    </ligand>
</feature>